<keyword id="KW-0066">ATP synthesis</keyword>
<keyword id="KW-0997">Cell inner membrane</keyword>
<keyword id="KW-1003">Cell membrane</keyword>
<keyword id="KW-0139">CF(1)</keyword>
<keyword id="KW-0375">Hydrogen ion transport</keyword>
<keyword id="KW-0406">Ion transport</keyword>
<keyword id="KW-0472">Membrane</keyword>
<keyword id="KW-1185">Reference proteome</keyword>
<keyword id="KW-0813">Transport</keyword>
<organism>
    <name type="scientific">Ehrlichia chaffeensis (strain ATCC CRL-10679 / Arkansas)</name>
    <dbReference type="NCBI Taxonomy" id="205920"/>
    <lineage>
        <taxon>Bacteria</taxon>
        <taxon>Pseudomonadati</taxon>
        <taxon>Pseudomonadota</taxon>
        <taxon>Alphaproteobacteria</taxon>
        <taxon>Rickettsiales</taxon>
        <taxon>Anaplasmataceae</taxon>
        <taxon>Ehrlichia</taxon>
    </lineage>
</organism>
<proteinExistence type="inferred from homology"/>
<gene>
    <name evidence="1" type="primary">atpH</name>
    <name type="ordered locus">ECH_0131</name>
</gene>
<sequence length="185" mass="20653">MIQYRGGYIASCYAQALFSVSSNVNSICKNAEFVVSVLENCNDISLFLSNPRVSREDKVKLVEVIGDYIDSILVKFIMVVIENNRGNILLQILNTFLDLVKKHNREVSISVTSCAVLTKQEEEGICDALFEKYGKVVSITNNIDPSILGGFIIRVNFDVIDVSLNSYLQSLRELSKMAIRSSISE</sequence>
<comment type="function">
    <text evidence="1">F(1)F(0) ATP synthase produces ATP from ADP in the presence of a proton or sodium gradient. F-type ATPases consist of two structural domains, F(1) containing the extramembraneous catalytic core and F(0) containing the membrane proton channel, linked together by a central stalk and a peripheral stalk. During catalysis, ATP synthesis in the catalytic domain of F(1) is coupled via a rotary mechanism of the central stalk subunits to proton translocation.</text>
</comment>
<comment type="function">
    <text evidence="1">This protein is part of the stalk that links CF(0) to CF(1). It either transmits conformational changes from CF(0) to CF(1) or is implicated in proton conduction.</text>
</comment>
<comment type="subunit">
    <text evidence="1">F-type ATPases have 2 components, F(1) - the catalytic core - and F(0) - the membrane proton channel. F(1) has five subunits: alpha(3), beta(3), gamma(1), delta(1), epsilon(1). F(0) has three main subunits: a(1), b(2) and c(10-14). The alpha and beta chains form an alternating ring which encloses part of the gamma chain. F(1) is attached to F(0) by a central stalk formed by the gamma and epsilon chains, while a peripheral stalk is formed by the delta and b chains.</text>
</comment>
<comment type="subcellular location">
    <subcellularLocation>
        <location evidence="1">Cell inner membrane</location>
        <topology evidence="1">Peripheral membrane protein</topology>
    </subcellularLocation>
</comment>
<comment type="similarity">
    <text evidence="1">Belongs to the ATPase delta chain family.</text>
</comment>
<protein>
    <recommendedName>
        <fullName evidence="1">ATP synthase subunit delta</fullName>
    </recommendedName>
    <alternativeName>
        <fullName evidence="1">ATP synthase F(1) sector subunit delta</fullName>
    </alternativeName>
    <alternativeName>
        <fullName evidence="1">F-type ATPase subunit delta</fullName>
        <shortName evidence="1">F-ATPase subunit delta</shortName>
    </alternativeName>
</protein>
<evidence type="ECO:0000255" key="1">
    <source>
        <dbReference type="HAMAP-Rule" id="MF_01416"/>
    </source>
</evidence>
<name>ATPD_EHRCR</name>
<dbReference type="EMBL" id="CP000236">
    <property type="protein sequence ID" value="ABD44989.1"/>
    <property type="molecule type" value="Genomic_DNA"/>
</dbReference>
<dbReference type="RefSeq" id="WP_011452419.1">
    <property type="nucleotide sequence ID" value="NC_007799.1"/>
</dbReference>
<dbReference type="SMR" id="Q2GHX4"/>
<dbReference type="STRING" id="205920.ECH_0131"/>
<dbReference type="KEGG" id="ech:ECH_0131"/>
<dbReference type="eggNOG" id="COG0712">
    <property type="taxonomic scope" value="Bacteria"/>
</dbReference>
<dbReference type="HOGENOM" id="CLU_085114_1_2_5"/>
<dbReference type="OrthoDB" id="9796185at2"/>
<dbReference type="Proteomes" id="UP000008320">
    <property type="component" value="Chromosome"/>
</dbReference>
<dbReference type="GO" id="GO:0005886">
    <property type="term" value="C:plasma membrane"/>
    <property type="evidence" value="ECO:0007669"/>
    <property type="project" value="UniProtKB-SubCell"/>
</dbReference>
<dbReference type="GO" id="GO:0045259">
    <property type="term" value="C:proton-transporting ATP synthase complex"/>
    <property type="evidence" value="ECO:0007669"/>
    <property type="project" value="UniProtKB-KW"/>
</dbReference>
<dbReference type="GO" id="GO:0046933">
    <property type="term" value="F:proton-transporting ATP synthase activity, rotational mechanism"/>
    <property type="evidence" value="ECO:0007669"/>
    <property type="project" value="UniProtKB-UniRule"/>
</dbReference>
<dbReference type="Gene3D" id="1.10.520.20">
    <property type="entry name" value="N-terminal domain of the delta subunit of the F1F0-ATP synthase"/>
    <property type="match status" value="1"/>
</dbReference>
<dbReference type="HAMAP" id="MF_01416">
    <property type="entry name" value="ATP_synth_delta_bact"/>
    <property type="match status" value="1"/>
</dbReference>
<dbReference type="InterPro" id="IPR026015">
    <property type="entry name" value="ATP_synth_OSCP/delta_N_sf"/>
</dbReference>
<dbReference type="InterPro" id="IPR020781">
    <property type="entry name" value="ATPase_OSCP/d_CS"/>
</dbReference>
<dbReference type="InterPro" id="IPR000711">
    <property type="entry name" value="ATPase_OSCP/dsu"/>
</dbReference>
<dbReference type="NCBIfam" id="TIGR01145">
    <property type="entry name" value="ATP_synt_delta"/>
    <property type="match status" value="1"/>
</dbReference>
<dbReference type="PANTHER" id="PTHR11910">
    <property type="entry name" value="ATP SYNTHASE DELTA CHAIN"/>
    <property type="match status" value="1"/>
</dbReference>
<dbReference type="Pfam" id="PF00213">
    <property type="entry name" value="OSCP"/>
    <property type="match status" value="1"/>
</dbReference>
<dbReference type="PRINTS" id="PR00125">
    <property type="entry name" value="ATPASEDELTA"/>
</dbReference>
<dbReference type="SUPFAM" id="SSF47928">
    <property type="entry name" value="N-terminal domain of the delta subunit of the F1F0-ATP synthase"/>
    <property type="match status" value="1"/>
</dbReference>
<dbReference type="PROSITE" id="PS00389">
    <property type="entry name" value="ATPASE_DELTA"/>
    <property type="match status" value="1"/>
</dbReference>
<reference key="1">
    <citation type="journal article" date="2006" name="PLoS Genet.">
        <title>Comparative genomics of emerging human ehrlichiosis agents.</title>
        <authorList>
            <person name="Dunning Hotopp J.C."/>
            <person name="Lin M."/>
            <person name="Madupu R."/>
            <person name="Crabtree J."/>
            <person name="Angiuoli S.V."/>
            <person name="Eisen J.A."/>
            <person name="Seshadri R."/>
            <person name="Ren Q."/>
            <person name="Wu M."/>
            <person name="Utterback T.R."/>
            <person name="Smith S."/>
            <person name="Lewis M."/>
            <person name="Khouri H."/>
            <person name="Zhang C."/>
            <person name="Niu H."/>
            <person name="Lin Q."/>
            <person name="Ohashi N."/>
            <person name="Zhi N."/>
            <person name="Nelson W.C."/>
            <person name="Brinkac L.M."/>
            <person name="Dodson R.J."/>
            <person name="Rosovitz M.J."/>
            <person name="Sundaram J.P."/>
            <person name="Daugherty S.C."/>
            <person name="Davidsen T."/>
            <person name="Durkin A.S."/>
            <person name="Gwinn M.L."/>
            <person name="Haft D.H."/>
            <person name="Selengut J.D."/>
            <person name="Sullivan S.A."/>
            <person name="Zafar N."/>
            <person name="Zhou L."/>
            <person name="Benahmed F."/>
            <person name="Forberger H."/>
            <person name="Halpin R."/>
            <person name="Mulligan S."/>
            <person name="Robinson J."/>
            <person name="White O."/>
            <person name="Rikihisa Y."/>
            <person name="Tettelin H."/>
        </authorList>
    </citation>
    <scope>NUCLEOTIDE SEQUENCE [LARGE SCALE GENOMIC DNA]</scope>
    <source>
        <strain>ATCC CRL-10679 / Arkansas</strain>
    </source>
</reference>
<feature type="chain" id="PRO_0000370969" description="ATP synthase subunit delta">
    <location>
        <begin position="1"/>
        <end position="185"/>
    </location>
</feature>
<accession>Q2GHX4</accession>